<keyword id="KW-0249">Electron transport</keyword>
<keyword id="KW-0349">Heme</keyword>
<keyword id="KW-0408">Iron</keyword>
<keyword id="KW-0472">Membrane</keyword>
<keyword id="KW-0479">Metal-binding</keyword>
<keyword id="KW-0496">Mitochondrion</keyword>
<keyword id="KW-0999">Mitochondrion inner membrane</keyword>
<keyword id="KW-0679">Respiratory chain</keyword>
<keyword id="KW-0812">Transmembrane</keyword>
<keyword id="KW-1133">Transmembrane helix</keyword>
<keyword id="KW-0813">Transport</keyword>
<keyword id="KW-0830">Ubiquinone</keyword>
<geneLocation type="mitochondrion"/>
<sequence>MTNTRKNHPLLKIINNSLIDLPTPPNISSLWNFGSLLGACLTIQIITGLFLAMHYTADTMTAFSSVAHICRDVNYGWTIRYLHANGASMFFLCLFIHVGRGLYYGSFTLLETWNVGITLLFSVMATAFMGYVLPWGQMSFWGATVITNLLSAIPYVGTDLVEWIWGGFSVGKATLTRFFALHFILPFITSALVMIHLLFLHETGSNNPLGVPSNSDKIPFHPYYTTKDFLGLLLLILLLMTMALFYPDLLGDPDNYTPANPLNTPPHIKPEWYFLFAYAILRSIPNKLGGVMALILSILILVMFPFLQPNKQQTMMFRPLSQFLFWILVADLLTLTWIGGQPVEDPFINIGQMASMLYFSLMIFIMPTTCFIENKMLKW</sequence>
<protein>
    <recommendedName>
        <fullName>Cytochrome b</fullName>
    </recommendedName>
    <alternativeName>
        <fullName>Complex III subunit 3</fullName>
    </alternativeName>
    <alternativeName>
        <fullName>Complex III subunit III</fullName>
    </alternativeName>
    <alternativeName>
        <fullName>Cytochrome b-c1 complex subunit 3</fullName>
    </alternativeName>
    <alternativeName>
        <fullName>Ubiquinol-cytochrome-c reductase complex cytochrome b subunit</fullName>
    </alternativeName>
</protein>
<comment type="function">
    <text evidence="2">Component of the ubiquinol-cytochrome c reductase complex (complex III or cytochrome b-c1 complex) that is part of the mitochondrial respiratory chain. The b-c1 complex mediates electron transfer from ubiquinol to cytochrome c. Contributes to the generation of a proton gradient across the mitochondrial membrane that is then used for ATP synthesis.</text>
</comment>
<comment type="cofactor">
    <cofactor evidence="2">
        <name>heme b</name>
        <dbReference type="ChEBI" id="CHEBI:60344"/>
    </cofactor>
    <text evidence="2">Binds 2 heme b groups non-covalently.</text>
</comment>
<comment type="subunit">
    <text evidence="2">The cytochrome bc1 complex contains 11 subunits: 3 respiratory subunits (MT-CYB, CYC1 and UQCRFS1), 2 core proteins (UQCRC1 and UQCRC2) and 6 low-molecular weight proteins (UQCRH/QCR6, UQCRB/QCR7, UQCRQ/QCR8, UQCR10/QCR9, UQCR11/QCR10 and a cleavage product of UQCRFS1). This cytochrome bc1 complex then forms a dimer.</text>
</comment>
<comment type="subcellular location">
    <subcellularLocation>
        <location evidence="2">Mitochondrion inner membrane</location>
        <topology evidence="2">Multi-pass membrane protein</topology>
    </subcellularLocation>
</comment>
<comment type="miscellaneous">
    <text evidence="1">Heme 1 (or BL or b562) is low-potential and absorbs at about 562 nm, and heme 2 (or BH or b566) is high-potential and absorbs at about 566 nm.</text>
</comment>
<comment type="similarity">
    <text evidence="3 4">Belongs to the cytochrome b family.</text>
</comment>
<comment type="caution">
    <text evidence="2">The full-length protein contains only eight transmembrane helices, not nine as predicted by bioinformatics tools.</text>
</comment>
<feature type="chain" id="PRO_0000254706" description="Cytochrome b">
    <location>
        <begin position="1"/>
        <end position="379"/>
    </location>
</feature>
<feature type="transmembrane region" description="Helical" evidence="2">
    <location>
        <begin position="33"/>
        <end position="53"/>
    </location>
</feature>
<feature type="transmembrane region" description="Helical" evidence="2">
    <location>
        <begin position="77"/>
        <end position="98"/>
    </location>
</feature>
<feature type="transmembrane region" description="Helical" evidence="2">
    <location>
        <begin position="113"/>
        <end position="133"/>
    </location>
</feature>
<feature type="transmembrane region" description="Helical" evidence="2">
    <location>
        <begin position="178"/>
        <end position="198"/>
    </location>
</feature>
<feature type="transmembrane region" description="Helical" evidence="2">
    <location>
        <begin position="226"/>
        <end position="246"/>
    </location>
</feature>
<feature type="transmembrane region" description="Helical" evidence="2">
    <location>
        <begin position="288"/>
        <end position="308"/>
    </location>
</feature>
<feature type="transmembrane region" description="Helical" evidence="2">
    <location>
        <begin position="320"/>
        <end position="340"/>
    </location>
</feature>
<feature type="transmembrane region" description="Helical" evidence="2">
    <location>
        <begin position="347"/>
        <end position="367"/>
    </location>
</feature>
<feature type="binding site" description="axial binding residue" evidence="2">
    <location>
        <position position="83"/>
    </location>
    <ligand>
        <name>heme b</name>
        <dbReference type="ChEBI" id="CHEBI:60344"/>
        <label>b562</label>
    </ligand>
    <ligandPart>
        <name>Fe</name>
        <dbReference type="ChEBI" id="CHEBI:18248"/>
    </ligandPart>
</feature>
<feature type="binding site" description="axial binding residue" evidence="2">
    <location>
        <position position="97"/>
    </location>
    <ligand>
        <name>heme b</name>
        <dbReference type="ChEBI" id="CHEBI:60344"/>
        <label>b566</label>
    </ligand>
    <ligandPart>
        <name>Fe</name>
        <dbReference type="ChEBI" id="CHEBI:18248"/>
    </ligandPart>
</feature>
<feature type="binding site" description="axial binding residue" evidence="2">
    <location>
        <position position="182"/>
    </location>
    <ligand>
        <name>heme b</name>
        <dbReference type="ChEBI" id="CHEBI:60344"/>
        <label>b562</label>
    </ligand>
    <ligandPart>
        <name>Fe</name>
        <dbReference type="ChEBI" id="CHEBI:18248"/>
    </ligandPart>
</feature>
<feature type="binding site" description="axial binding residue" evidence="2">
    <location>
        <position position="196"/>
    </location>
    <ligand>
        <name>heme b</name>
        <dbReference type="ChEBI" id="CHEBI:60344"/>
        <label>b566</label>
    </ligand>
    <ligandPart>
        <name>Fe</name>
        <dbReference type="ChEBI" id="CHEBI:18248"/>
    </ligandPart>
</feature>
<feature type="binding site" evidence="2">
    <location>
        <position position="201"/>
    </location>
    <ligand>
        <name>a ubiquinone</name>
        <dbReference type="ChEBI" id="CHEBI:16389"/>
    </ligand>
</feature>
<gene>
    <name type="primary">MT-CYB</name>
    <name type="synonym">COB</name>
    <name type="synonym">CYTB</name>
    <name type="synonym">MTCYB</name>
</gene>
<accession>Q20FR8</accession>
<organism>
    <name type="scientific">Lepilemur sahamalazensis</name>
    <name type="common">Sahamalaza sportive lemur</name>
    <dbReference type="NCBI Taxonomy" id="342398"/>
    <lineage>
        <taxon>Eukaryota</taxon>
        <taxon>Metazoa</taxon>
        <taxon>Chordata</taxon>
        <taxon>Craniata</taxon>
        <taxon>Vertebrata</taxon>
        <taxon>Euteleostomi</taxon>
        <taxon>Mammalia</taxon>
        <taxon>Eutheria</taxon>
        <taxon>Euarchontoglires</taxon>
        <taxon>Primates</taxon>
        <taxon>Strepsirrhini</taxon>
        <taxon>Lemuriformes</taxon>
        <taxon>Lepilemuridae</taxon>
        <taxon>Lepilemur</taxon>
    </lineage>
</organism>
<evidence type="ECO:0000250" key="1"/>
<evidence type="ECO:0000250" key="2">
    <source>
        <dbReference type="UniProtKB" id="P00157"/>
    </source>
</evidence>
<evidence type="ECO:0000255" key="3">
    <source>
        <dbReference type="PROSITE-ProRule" id="PRU00967"/>
    </source>
</evidence>
<evidence type="ECO:0000255" key="4">
    <source>
        <dbReference type="PROSITE-ProRule" id="PRU00968"/>
    </source>
</evidence>
<reference key="1">
    <citation type="journal article" date="2006" name="BMC Evol. Biol.">
        <title>Molecular phylogeny and taxonomic revision of the sportive lemurs (Lepilemur, Primates).</title>
        <authorList>
            <person name="Andriaholinirina N."/>
            <person name="Fausser J.-L."/>
            <person name="Roos C."/>
            <person name="Zinner D."/>
            <person name="Thalmann U."/>
            <person name="Rabarivola C."/>
            <person name="Ravoarimanana I."/>
            <person name="Ganzhorn J.U."/>
            <person name="Meier B."/>
            <person name="Hilgartner R."/>
            <person name="Walter L."/>
            <person name="Zaramody A."/>
            <person name="Langer C."/>
            <person name="Hahn T."/>
            <person name="Zimmermann E."/>
            <person name="Radespiel U."/>
            <person name="Craul M."/>
            <person name="Tomiuk J."/>
            <person name="Tattersall I."/>
            <person name="Rumpler Y."/>
        </authorList>
    </citation>
    <scope>NUCLEOTIDE SEQUENCE [GENOMIC DNA]</scope>
    <source>
        <strain>Isolate Ldo12</strain>
    </source>
</reference>
<proteinExistence type="inferred from homology"/>
<dbReference type="EMBL" id="DQ234883">
    <property type="protein sequence ID" value="ABB80432.1"/>
    <property type="molecule type" value="Genomic_DNA"/>
</dbReference>
<dbReference type="SMR" id="Q20FR8"/>
<dbReference type="GO" id="GO:0005743">
    <property type="term" value="C:mitochondrial inner membrane"/>
    <property type="evidence" value="ECO:0007669"/>
    <property type="project" value="UniProtKB-SubCell"/>
</dbReference>
<dbReference type="GO" id="GO:0045275">
    <property type="term" value="C:respiratory chain complex III"/>
    <property type="evidence" value="ECO:0007669"/>
    <property type="project" value="InterPro"/>
</dbReference>
<dbReference type="GO" id="GO:0046872">
    <property type="term" value="F:metal ion binding"/>
    <property type="evidence" value="ECO:0007669"/>
    <property type="project" value="UniProtKB-KW"/>
</dbReference>
<dbReference type="GO" id="GO:0008121">
    <property type="term" value="F:ubiquinol-cytochrome-c reductase activity"/>
    <property type="evidence" value="ECO:0007669"/>
    <property type="project" value="InterPro"/>
</dbReference>
<dbReference type="GO" id="GO:0006122">
    <property type="term" value="P:mitochondrial electron transport, ubiquinol to cytochrome c"/>
    <property type="evidence" value="ECO:0007669"/>
    <property type="project" value="TreeGrafter"/>
</dbReference>
<dbReference type="CDD" id="cd00290">
    <property type="entry name" value="cytochrome_b_C"/>
    <property type="match status" value="1"/>
</dbReference>
<dbReference type="CDD" id="cd00284">
    <property type="entry name" value="Cytochrome_b_N"/>
    <property type="match status" value="1"/>
</dbReference>
<dbReference type="FunFam" id="1.20.810.10:FF:000002">
    <property type="entry name" value="Cytochrome b"/>
    <property type="match status" value="1"/>
</dbReference>
<dbReference type="Gene3D" id="1.20.810.10">
    <property type="entry name" value="Cytochrome Bc1 Complex, Chain C"/>
    <property type="match status" value="1"/>
</dbReference>
<dbReference type="InterPro" id="IPR005798">
    <property type="entry name" value="Cyt_b/b6_C"/>
</dbReference>
<dbReference type="InterPro" id="IPR036150">
    <property type="entry name" value="Cyt_b/b6_C_sf"/>
</dbReference>
<dbReference type="InterPro" id="IPR005797">
    <property type="entry name" value="Cyt_b/b6_N"/>
</dbReference>
<dbReference type="InterPro" id="IPR027387">
    <property type="entry name" value="Cytb/b6-like_sf"/>
</dbReference>
<dbReference type="InterPro" id="IPR030689">
    <property type="entry name" value="Cytochrome_b"/>
</dbReference>
<dbReference type="InterPro" id="IPR048260">
    <property type="entry name" value="Cytochrome_b_C_euk/bac"/>
</dbReference>
<dbReference type="InterPro" id="IPR048259">
    <property type="entry name" value="Cytochrome_b_N_euk/bac"/>
</dbReference>
<dbReference type="InterPro" id="IPR016174">
    <property type="entry name" value="Di-haem_cyt_TM"/>
</dbReference>
<dbReference type="PANTHER" id="PTHR19271">
    <property type="entry name" value="CYTOCHROME B"/>
    <property type="match status" value="1"/>
</dbReference>
<dbReference type="PANTHER" id="PTHR19271:SF16">
    <property type="entry name" value="CYTOCHROME B"/>
    <property type="match status" value="1"/>
</dbReference>
<dbReference type="Pfam" id="PF00032">
    <property type="entry name" value="Cytochrom_B_C"/>
    <property type="match status" value="1"/>
</dbReference>
<dbReference type="Pfam" id="PF00033">
    <property type="entry name" value="Cytochrome_B"/>
    <property type="match status" value="1"/>
</dbReference>
<dbReference type="PIRSF" id="PIRSF038885">
    <property type="entry name" value="COB"/>
    <property type="match status" value="1"/>
</dbReference>
<dbReference type="SUPFAM" id="SSF81648">
    <property type="entry name" value="a domain/subunit of cytochrome bc1 complex (Ubiquinol-cytochrome c reductase)"/>
    <property type="match status" value="1"/>
</dbReference>
<dbReference type="SUPFAM" id="SSF81342">
    <property type="entry name" value="Transmembrane di-heme cytochromes"/>
    <property type="match status" value="1"/>
</dbReference>
<dbReference type="PROSITE" id="PS51003">
    <property type="entry name" value="CYTB_CTER"/>
    <property type="match status" value="1"/>
</dbReference>
<dbReference type="PROSITE" id="PS51002">
    <property type="entry name" value="CYTB_NTER"/>
    <property type="match status" value="1"/>
</dbReference>
<name>CYB_LEPSH</name>